<reference key="1">
    <citation type="journal article" date="2003" name="Microbiology">
        <title>The complete genome sequence of the avian pathogen Mycoplasma gallisepticum strain R(low).</title>
        <authorList>
            <person name="Papazisi L."/>
            <person name="Gorton T.S."/>
            <person name="Kutish G."/>
            <person name="Markham P.F."/>
            <person name="Browning G.F."/>
            <person name="Nguyen D.K."/>
            <person name="Swartzell S."/>
            <person name="Madan A."/>
            <person name="Mahairas G."/>
            <person name="Geary S.J."/>
        </authorList>
    </citation>
    <scope>NUCLEOTIDE SEQUENCE [LARGE SCALE GENOMIC DNA]</scope>
    <source>
        <strain>R(low / passage 15 / clone 2)</strain>
    </source>
</reference>
<gene>
    <name evidence="1" type="primary">deoC</name>
    <name type="ordered locus">MYCGA5850</name>
    <name type="ORF">MGA_0363</name>
</gene>
<accession>Q7NAQ0</accession>
<organism>
    <name type="scientific">Mycoplasmoides gallisepticum (strain R(low / passage 15 / clone 2))</name>
    <name type="common">Mycoplasma gallisepticum</name>
    <dbReference type="NCBI Taxonomy" id="710127"/>
    <lineage>
        <taxon>Bacteria</taxon>
        <taxon>Bacillati</taxon>
        <taxon>Mycoplasmatota</taxon>
        <taxon>Mycoplasmoidales</taxon>
        <taxon>Mycoplasmoidaceae</taxon>
        <taxon>Mycoplasmoides</taxon>
    </lineage>
</organism>
<feature type="chain" id="PRO_0000057240" description="Deoxyribose-phosphate aldolase">
    <location>
        <begin position="1"/>
        <end position="223"/>
    </location>
</feature>
<feature type="active site" description="Proton donor/acceptor" evidence="1">
    <location>
        <position position="92"/>
    </location>
</feature>
<feature type="active site" description="Schiff-base intermediate with acetaldehyde" evidence="1">
    <location>
        <position position="153"/>
    </location>
</feature>
<feature type="active site" description="Proton donor/acceptor" evidence="1">
    <location>
        <position position="182"/>
    </location>
</feature>
<sequence length="223" mass="24622">MSILNFNKLIDHTNLKANATYEEIERLCHEAIEYGFFSVCVNPAYIRTAKKILLKSPVKVCTVVDFPLGQTFSEQKVYEAKTSIKMGADEIDMVINIPELINGCACVIDEIRQVKKVCGEKILKVIVETALLNEEQIRKATLACIDGGADFIKTSTGFSTRGASLNDIKIMQQASQNKILIKASGGISTARELIEFVKVGADRIGTSRSVKLMQELKTMDLAK</sequence>
<proteinExistence type="inferred from homology"/>
<comment type="function">
    <text evidence="1">Catalyzes a reversible aldol reaction between acetaldehyde and D-glyceraldehyde 3-phosphate to generate 2-deoxy-D-ribose 5-phosphate.</text>
</comment>
<comment type="catalytic activity">
    <reaction evidence="1">
        <text>2-deoxy-D-ribose 5-phosphate = D-glyceraldehyde 3-phosphate + acetaldehyde</text>
        <dbReference type="Rhea" id="RHEA:12821"/>
        <dbReference type="ChEBI" id="CHEBI:15343"/>
        <dbReference type="ChEBI" id="CHEBI:59776"/>
        <dbReference type="ChEBI" id="CHEBI:62877"/>
        <dbReference type="EC" id="4.1.2.4"/>
    </reaction>
</comment>
<comment type="pathway">
    <text evidence="1">Carbohydrate degradation; 2-deoxy-D-ribose 1-phosphate degradation; D-glyceraldehyde 3-phosphate and acetaldehyde from 2-deoxy-alpha-D-ribose 1-phosphate: step 2/2.</text>
</comment>
<comment type="subcellular location">
    <subcellularLocation>
        <location evidence="1">Cytoplasm</location>
    </subcellularLocation>
</comment>
<comment type="similarity">
    <text evidence="1">Belongs to the DeoC/FbaB aldolase family. DeoC type 1 subfamily.</text>
</comment>
<dbReference type="EC" id="4.1.2.4" evidence="1"/>
<dbReference type="EMBL" id="AE015450">
    <property type="protein sequence ID" value="AAP56935.2"/>
    <property type="molecule type" value="Genomic_DNA"/>
</dbReference>
<dbReference type="RefSeq" id="WP_011113842.1">
    <property type="nucleotide sequence ID" value="NC_004829.2"/>
</dbReference>
<dbReference type="SMR" id="Q7NAQ0"/>
<dbReference type="KEGG" id="mga:MGA_0363"/>
<dbReference type="PATRIC" id="fig|233150.7.peg.657"/>
<dbReference type="HOGENOM" id="CLU_053595_0_2_14"/>
<dbReference type="OrthoDB" id="9778711at2"/>
<dbReference type="UniPathway" id="UPA00002">
    <property type="reaction ID" value="UER00468"/>
</dbReference>
<dbReference type="Proteomes" id="UP000001418">
    <property type="component" value="Chromosome"/>
</dbReference>
<dbReference type="GO" id="GO:0005737">
    <property type="term" value="C:cytoplasm"/>
    <property type="evidence" value="ECO:0007669"/>
    <property type="project" value="UniProtKB-SubCell"/>
</dbReference>
<dbReference type="GO" id="GO:0004139">
    <property type="term" value="F:deoxyribose-phosphate aldolase activity"/>
    <property type="evidence" value="ECO:0007669"/>
    <property type="project" value="UniProtKB-UniRule"/>
</dbReference>
<dbReference type="GO" id="GO:0006018">
    <property type="term" value="P:2-deoxyribose 1-phosphate catabolic process"/>
    <property type="evidence" value="ECO:0007669"/>
    <property type="project" value="UniProtKB-UniRule"/>
</dbReference>
<dbReference type="GO" id="GO:0016052">
    <property type="term" value="P:carbohydrate catabolic process"/>
    <property type="evidence" value="ECO:0007669"/>
    <property type="project" value="TreeGrafter"/>
</dbReference>
<dbReference type="GO" id="GO:0009264">
    <property type="term" value="P:deoxyribonucleotide catabolic process"/>
    <property type="evidence" value="ECO:0007669"/>
    <property type="project" value="InterPro"/>
</dbReference>
<dbReference type="CDD" id="cd00959">
    <property type="entry name" value="DeoC"/>
    <property type="match status" value="1"/>
</dbReference>
<dbReference type="FunFam" id="3.20.20.70:FF:000044">
    <property type="entry name" value="Deoxyribose-phosphate aldolase"/>
    <property type="match status" value="1"/>
</dbReference>
<dbReference type="Gene3D" id="3.20.20.70">
    <property type="entry name" value="Aldolase class I"/>
    <property type="match status" value="1"/>
</dbReference>
<dbReference type="HAMAP" id="MF_00114">
    <property type="entry name" value="DeoC_type1"/>
    <property type="match status" value="1"/>
</dbReference>
<dbReference type="InterPro" id="IPR013785">
    <property type="entry name" value="Aldolase_TIM"/>
</dbReference>
<dbReference type="InterPro" id="IPR011343">
    <property type="entry name" value="DeoC"/>
</dbReference>
<dbReference type="InterPro" id="IPR002915">
    <property type="entry name" value="DeoC/FbaB/LacD_aldolase"/>
</dbReference>
<dbReference type="InterPro" id="IPR028581">
    <property type="entry name" value="DeoC_typeI"/>
</dbReference>
<dbReference type="NCBIfam" id="TIGR00126">
    <property type="entry name" value="deoC"/>
    <property type="match status" value="1"/>
</dbReference>
<dbReference type="PANTHER" id="PTHR10889">
    <property type="entry name" value="DEOXYRIBOSE-PHOSPHATE ALDOLASE"/>
    <property type="match status" value="1"/>
</dbReference>
<dbReference type="PANTHER" id="PTHR10889:SF1">
    <property type="entry name" value="DEOXYRIBOSE-PHOSPHATE ALDOLASE"/>
    <property type="match status" value="1"/>
</dbReference>
<dbReference type="Pfam" id="PF01791">
    <property type="entry name" value="DeoC"/>
    <property type="match status" value="1"/>
</dbReference>
<dbReference type="PIRSF" id="PIRSF001357">
    <property type="entry name" value="DeoC"/>
    <property type="match status" value="1"/>
</dbReference>
<dbReference type="SMART" id="SM01133">
    <property type="entry name" value="DeoC"/>
    <property type="match status" value="1"/>
</dbReference>
<dbReference type="SUPFAM" id="SSF51569">
    <property type="entry name" value="Aldolase"/>
    <property type="match status" value="1"/>
</dbReference>
<evidence type="ECO:0000255" key="1">
    <source>
        <dbReference type="HAMAP-Rule" id="MF_00114"/>
    </source>
</evidence>
<keyword id="KW-0963">Cytoplasm</keyword>
<keyword id="KW-0456">Lyase</keyword>
<keyword id="KW-1185">Reference proteome</keyword>
<keyword id="KW-0704">Schiff base</keyword>
<name>DEOC_MYCGA</name>
<protein>
    <recommendedName>
        <fullName evidence="1">Deoxyribose-phosphate aldolase</fullName>
        <shortName evidence="1">DERA</shortName>
        <ecNumber evidence="1">4.1.2.4</ecNumber>
    </recommendedName>
    <alternativeName>
        <fullName evidence="1">2-deoxy-D-ribose 5-phosphate aldolase</fullName>
    </alternativeName>
    <alternativeName>
        <fullName evidence="1">Phosphodeoxyriboaldolase</fullName>
        <shortName evidence="1">Deoxyriboaldolase</shortName>
    </alternativeName>
</protein>